<sequence>NSCDCDIEWSSCSAYGFDHDEDYGFNEDTDRIIINTKAILLPTK</sequence>
<comment type="caution">
    <text evidence="1">The order of the peptides shown is unknown.</text>
</comment>
<keyword id="KW-0903">Direct protein sequencing</keyword>
<organism>
    <name type="scientific">Lonomia obliqua</name>
    <name type="common">Moth</name>
    <dbReference type="NCBI Taxonomy" id="304329"/>
    <lineage>
        <taxon>Eukaryota</taxon>
        <taxon>Metazoa</taxon>
        <taxon>Ecdysozoa</taxon>
        <taxon>Arthropoda</taxon>
        <taxon>Hexapoda</taxon>
        <taxon>Insecta</taxon>
        <taxon>Pterygota</taxon>
        <taxon>Neoptera</taxon>
        <taxon>Endopterygota</taxon>
        <taxon>Lepidoptera</taxon>
        <taxon>Glossata</taxon>
        <taxon>Ditrysia</taxon>
        <taxon>Bombycoidea</taxon>
        <taxon>Saturniidae</taxon>
        <taxon>Hemileucinae</taxon>
        <taxon>Lonomia</taxon>
    </lineage>
</organism>
<protein>
    <recommendedName>
        <fullName>Unknown protein 1</fullName>
    </recommendedName>
</protein>
<reference evidence="3" key="1">
    <citation type="journal article" date="2008" name="Toxicon">
        <title>Immunochemical and proteomic technologies as tools for unravelling toxins involved in envenoming by accidental contact with Lonomia obliqua caterpillars.</title>
        <authorList>
            <person name="Ricci-Silva M.E."/>
            <person name="Valente R.H."/>
            <person name="Leon I.R."/>
            <person name="Tambourgi D.V."/>
            <person name="Ramos O.H.P."/>
            <person name="Perales J."/>
            <person name="Chudzinski-Tavassi A.M."/>
        </authorList>
    </citation>
    <scope>PROTEIN SEQUENCE</scope>
    <source>
        <tissue evidence="1">Larval bristle</tissue>
    </source>
</reference>
<accession>P85198</accession>
<evidence type="ECO:0000269" key="1">
    <source>
    </source>
</evidence>
<evidence type="ECO:0000303" key="2">
    <source>
    </source>
</evidence>
<evidence type="ECO:0000305" key="3"/>
<name>UP01_LONON</name>
<feature type="chain" id="PRO_0000296378" description="Unknown protein 1">
    <location>
        <begin position="1" status="less than"/>
        <end position="44" status="greater than"/>
    </location>
</feature>
<feature type="unsure residue" description="I or L" evidence="1">
    <location>
        <position position="7"/>
    </location>
</feature>
<feature type="unsure residue" description="I or L" evidence="1">
    <location>
        <position position="32"/>
    </location>
</feature>
<feature type="unsure residue" description="I or L" evidence="1">
    <location>
        <position position="33"/>
    </location>
</feature>
<feature type="unsure residue" description="I or L" evidence="1">
    <location>
        <position position="34"/>
    </location>
</feature>
<feature type="unsure residue" description="I or L" evidence="1">
    <location>
        <position position="39"/>
    </location>
</feature>
<feature type="unsure residue" description="L or I" evidence="1">
    <location>
        <position position="40"/>
    </location>
</feature>
<feature type="unsure residue" description="L or I" evidence="1">
    <location>
        <position position="41"/>
    </location>
</feature>
<feature type="non-consecutive residues" evidence="2">
    <location>
        <begin position="8"/>
        <end position="9"/>
    </location>
</feature>
<feature type="non-consecutive residues" evidence="2">
    <location>
        <begin position="18"/>
        <end position="19"/>
    </location>
</feature>
<feature type="non-consecutive residues" evidence="2">
    <location>
        <begin position="31"/>
        <end position="32"/>
    </location>
</feature>
<feature type="non-consecutive residues" evidence="3">
    <location>
        <begin position="37"/>
        <end position="38"/>
    </location>
</feature>
<feature type="non-terminal residue" evidence="2">
    <location>
        <position position="1"/>
    </location>
</feature>
<feature type="non-terminal residue" evidence="2">
    <location>
        <position position="44"/>
    </location>
</feature>
<proteinExistence type="evidence at protein level"/>